<keyword id="KW-0217">Developmental protein</keyword>
<keyword id="KW-0221">Differentiation</keyword>
<keyword id="KW-0306">Gastrulation</keyword>
<keyword id="KW-0440">LIM domain</keyword>
<keyword id="KW-0479">Metal-binding</keyword>
<keyword id="KW-0524">Neurogenesis</keyword>
<keyword id="KW-1185">Reference proteome</keyword>
<keyword id="KW-0677">Repeat</keyword>
<keyword id="KW-0804">Transcription</keyword>
<keyword id="KW-0805">Transcription regulation</keyword>
<keyword id="KW-0862">Zinc</keyword>
<feature type="chain" id="PRO_0000317221" description="LIM domain transcription factor LMO4-A">
    <location>
        <begin position="1"/>
        <end position="171"/>
    </location>
</feature>
<feature type="domain" description="LIM zinc-binding 1" evidence="1">
    <location>
        <begin position="22"/>
        <end position="84"/>
    </location>
</feature>
<feature type="domain" description="LIM zinc-binding 2" evidence="1">
    <location>
        <begin position="86"/>
        <end position="148"/>
    </location>
</feature>
<feature type="region of interest" description="Disordered" evidence="2">
    <location>
        <begin position="1"/>
        <end position="21"/>
    </location>
</feature>
<feature type="compositionally biased region" description="Polar residues" evidence="2">
    <location>
        <begin position="1"/>
        <end position="19"/>
    </location>
</feature>
<name>LMO4A_XENLA</name>
<accession>Q8AW92</accession>
<gene>
    <name type="primary">lmo4-a</name>
    <name evidence="6" type="synonym">lmo4</name>
</gene>
<comment type="function">
    <text evidence="3">Acts as a positive cofactor of GATA transcription factors to establish the identity of the ventral mesoderm during gastrulation. Down-regulation in the dorsal mesoderm is necessary for the proper formation of this territory since, when present, lmo4 may bind ldb1 and restrict the availability of this cofactor for Spemman organizer transcription factors. At neurula stages, suppresses primary neuron differentiation and modulates gene expression at the Isthmic Organizer of the midbrain-hindbrain boundary.</text>
</comment>
<comment type="interaction">
    <interactant intactId="EBI-15667028">
        <id>Q8AW92</id>
    </interactant>
    <interactant intactId="EBI-15667006">
        <id>O13097</id>
        <label>efnb1</label>
    </interactant>
    <organismsDiffer>false</organismsDiffer>
    <experiments>2</experiments>
</comment>
<comment type="tissue specificity">
    <text evidence="3">At the start of gastrulation (stage 10), expressed in the mesodermal marginal zone. Shortly after (stage 11), expression is down-regulated in the dorsal most region. During neurulation, expressed in the neural plate and ventral epidermis. At late neurula stages, also expressed more rostrally, and then in the brain, migrating neural crests and ventral epidermis.</text>
</comment>
<comment type="developmental stage">
    <text evidence="3">Expressed both maternally and zygotically.</text>
</comment>
<comment type="induction">
    <text evidence="3">By irx1 in the neural plate. By bmp4-signaling in the ventral mesoderm. Down-regulated in the dorsal mesoderm at stage 11 by Spemann Organizer repressors including gsc.</text>
</comment>
<sequence length="171" mass="18630">MVNNRSSESTTTAVSSNGSPPKACAGCGGKIGDRFLLYSMDRYWHTRCLKCSCCQAQLGEIGTSCYTKSGMILCRNDYIRLFGNSGACNACGQSIPASEMVMRAQGSVYHLKCFTCATCRNRLVPGDRFHYVNGTIFCEHDRPTGLLNGHLNPLQSNPLQGSPMLPDQKVC</sequence>
<dbReference type="EMBL" id="AJ511277">
    <property type="protein sequence ID" value="CAD54077.1"/>
    <property type="molecule type" value="mRNA"/>
</dbReference>
<dbReference type="EMBL" id="BC108585">
    <property type="protein sequence ID" value="AAI08586.1"/>
    <property type="molecule type" value="mRNA"/>
</dbReference>
<dbReference type="RefSeq" id="NP_001079179.1">
    <property type="nucleotide sequence ID" value="NM_001085710.1"/>
</dbReference>
<dbReference type="SMR" id="Q8AW92"/>
<dbReference type="DIP" id="DIP-60984N"/>
<dbReference type="IntAct" id="Q8AW92">
    <property type="interactions" value="1"/>
</dbReference>
<dbReference type="DNASU" id="373776"/>
<dbReference type="GeneID" id="373776"/>
<dbReference type="KEGG" id="xla:373776"/>
<dbReference type="AGR" id="Xenbase:XB-GENE-865262"/>
<dbReference type="CTD" id="373776"/>
<dbReference type="Xenbase" id="XB-GENE-865262">
    <property type="gene designation" value="lmo4.2.L"/>
</dbReference>
<dbReference type="OrthoDB" id="6352355at2759"/>
<dbReference type="Proteomes" id="UP000186698">
    <property type="component" value="Chromosome 8L"/>
</dbReference>
<dbReference type="Bgee" id="373776">
    <property type="expression patterns" value="Expressed in heart and 19 other cell types or tissues"/>
</dbReference>
<dbReference type="GO" id="GO:0046872">
    <property type="term" value="F:metal ion binding"/>
    <property type="evidence" value="ECO:0007669"/>
    <property type="project" value="UniProtKB-KW"/>
</dbReference>
<dbReference type="GO" id="GO:0003712">
    <property type="term" value="F:transcription coregulator activity"/>
    <property type="evidence" value="ECO:0000315"/>
    <property type="project" value="UniProtKB"/>
</dbReference>
<dbReference type="GO" id="GO:0030154">
    <property type="term" value="P:cell differentiation"/>
    <property type="evidence" value="ECO:0007669"/>
    <property type="project" value="UniProtKB-KW"/>
</dbReference>
<dbReference type="GO" id="GO:0007369">
    <property type="term" value="P:gastrulation"/>
    <property type="evidence" value="ECO:0007669"/>
    <property type="project" value="UniProtKB-KW"/>
</dbReference>
<dbReference type="GO" id="GO:0007498">
    <property type="term" value="P:mesoderm development"/>
    <property type="evidence" value="ECO:0000315"/>
    <property type="project" value="UniProtKB"/>
</dbReference>
<dbReference type="GO" id="GO:0045665">
    <property type="term" value="P:negative regulation of neuron differentiation"/>
    <property type="evidence" value="ECO:0000315"/>
    <property type="project" value="UniProtKB"/>
</dbReference>
<dbReference type="GO" id="GO:0007399">
    <property type="term" value="P:nervous system development"/>
    <property type="evidence" value="ECO:0007669"/>
    <property type="project" value="UniProtKB-KW"/>
</dbReference>
<dbReference type="GO" id="GO:0045944">
    <property type="term" value="P:positive regulation of transcription by RNA polymerase II"/>
    <property type="evidence" value="ECO:0000315"/>
    <property type="project" value="UniProtKB"/>
</dbReference>
<dbReference type="CDD" id="cd09386">
    <property type="entry name" value="LIM1_LMO4"/>
    <property type="match status" value="1"/>
</dbReference>
<dbReference type="CDD" id="cd09387">
    <property type="entry name" value="LIM2_LMO4"/>
    <property type="match status" value="1"/>
</dbReference>
<dbReference type="FunFam" id="2.10.110.10:FF:000015">
    <property type="entry name" value="LIM domain only 3"/>
    <property type="match status" value="1"/>
</dbReference>
<dbReference type="FunFam" id="2.10.110.10:FF:000051">
    <property type="entry name" value="LIM domain transcription factor LMO4"/>
    <property type="match status" value="1"/>
</dbReference>
<dbReference type="Gene3D" id="2.10.110.10">
    <property type="entry name" value="Cysteine Rich Protein"/>
    <property type="match status" value="2"/>
</dbReference>
<dbReference type="InterPro" id="IPR050945">
    <property type="entry name" value="LMO_RBTN_TF"/>
</dbReference>
<dbReference type="InterPro" id="IPR001781">
    <property type="entry name" value="Znf_LIM"/>
</dbReference>
<dbReference type="PANTHER" id="PTHR45787">
    <property type="entry name" value="LD11652P"/>
    <property type="match status" value="1"/>
</dbReference>
<dbReference type="PANTHER" id="PTHR45787:SF8">
    <property type="entry name" value="LIM DOMAIN ONLY 4-RELATED"/>
    <property type="match status" value="1"/>
</dbReference>
<dbReference type="Pfam" id="PF00412">
    <property type="entry name" value="LIM"/>
    <property type="match status" value="2"/>
</dbReference>
<dbReference type="SMART" id="SM00132">
    <property type="entry name" value="LIM"/>
    <property type="match status" value="2"/>
</dbReference>
<dbReference type="SUPFAM" id="SSF57716">
    <property type="entry name" value="Glucocorticoid receptor-like (DNA-binding domain)"/>
    <property type="match status" value="4"/>
</dbReference>
<dbReference type="PROSITE" id="PS00478">
    <property type="entry name" value="LIM_DOMAIN_1"/>
    <property type="match status" value="2"/>
</dbReference>
<dbReference type="PROSITE" id="PS50023">
    <property type="entry name" value="LIM_DOMAIN_2"/>
    <property type="match status" value="2"/>
</dbReference>
<reference evidence="4 6" key="1">
    <citation type="journal article" date="2003" name="Dev. Biol.">
        <title>Xenopus Xlmo4 is a GATA cofactor during ventral mesoderm formation and regulates Ldb1 availability at the dorsal mesoderm and the neural plate.</title>
        <authorList>
            <person name="de la Calle-Mustienes E."/>
            <person name="Lu Z."/>
            <person name="Cortes M."/>
            <person name="Andersen B."/>
            <person name="Modolell J."/>
            <person name="Gomez-Skarmeta J.L."/>
        </authorList>
    </citation>
    <scope>NUCLEOTIDE SEQUENCE [MRNA]</scope>
    <scope>FUNCTION</scope>
    <scope>TISSUE SPECIFICITY</scope>
    <scope>DEVELOPMENTAL STAGE</scope>
    <scope>INDUCTION</scope>
    <source>
        <tissue evidence="3">Animal cap</tissue>
    </source>
</reference>
<reference evidence="5" key="2">
    <citation type="submission" date="2005-11" db="EMBL/GenBank/DDBJ databases">
        <authorList>
            <consortium name="NIH - Xenopus Gene Collection (XGC) project"/>
        </authorList>
    </citation>
    <scope>NUCLEOTIDE SEQUENCE [LARGE SCALE MRNA]</scope>
    <source>
        <tissue evidence="5">Neurula</tissue>
    </source>
</reference>
<evidence type="ECO:0000255" key="1">
    <source>
        <dbReference type="PROSITE-ProRule" id="PRU00125"/>
    </source>
</evidence>
<evidence type="ECO:0000256" key="2">
    <source>
        <dbReference type="SAM" id="MobiDB-lite"/>
    </source>
</evidence>
<evidence type="ECO:0000269" key="3">
    <source>
    </source>
</evidence>
<evidence type="ECO:0000305" key="4"/>
<evidence type="ECO:0000312" key="5">
    <source>
        <dbReference type="EMBL" id="AAI08586.1"/>
    </source>
</evidence>
<evidence type="ECO:0000312" key="6">
    <source>
        <dbReference type="EMBL" id="CAD54077.1"/>
    </source>
</evidence>
<protein>
    <recommendedName>
        <fullName>LIM domain transcription factor LMO4-A</fullName>
    </recommendedName>
    <alternativeName>
        <fullName>LIM domain only protein 4-A</fullName>
        <shortName>LMO-4-A</shortName>
    </alternativeName>
    <alternativeName>
        <fullName>Xlmo4</fullName>
    </alternativeName>
</protein>
<proteinExistence type="evidence at protein level"/>
<organism>
    <name type="scientific">Xenopus laevis</name>
    <name type="common">African clawed frog</name>
    <dbReference type="NCBI Taxonomy" id="8355"/>
    <lineage>
        <taxon>Eukaryota</taxon>
        <taxon>Metazoa</taxon>
        <taxon>Chordata</taxon>
        <taxon>Craniata</taxon>
        <taxon>Vertebrata</taxon>
        <taxon>Euteleostomi</taxon>
        <taxon>Amphibia</taxon>
        <taxon>Batrachia</taxon>
        <taxon>Anura</taxon>
        <taxon>Pipoidea</taxon>
        <taxon>Pipidae</taxon>
        <taxon>Xenopodinae</taxon>
        <taxon>Xenopus</taxon>
        <taxon>Xenopus</taxon>
    </lineage>
</organism>